<organism>
    <name type="scientific">Oryctolagus cuniculus</name>
    <name type="common">Rabbit</name>
    <dbReference type="NCBI Taxonomy" id="9986"/>
    <lineage>
        <taxon>Eukaryota</taxon>
        <taxon>Metazoa</taxon>
        <taxon>Chordata</taxon>
        <taxon>Craniata</taxon>
        <taxon>Vertebrata</taxon>
        <taxon>Euteleostomi</taxon>
        <taxon>Mammalia</taxon>
        <taxon>Eutheria</taxon>
        <taxon>Euarchontoglires</taxon>
        <taxon>Glires</taxon>
        <taxon>Lagomorpha</taxon>
        <taxon>Leporidae</taxon>
        <taxon>Oryctolagus</taxon>
    </lineage>
</organism>
<evidence type="ECO:0000250" key="1"/>
<evidence type="ECO:0000250" key="2">
    <source>
        <dbReference type="UniProtKB" id="P26883"/>
    </source>
</evidence>
<evidence type="ECO:0000250" key="3">
    <source>
        <dbReference type="UniProtKB" id="P62942"/>
    </source>
</evidence>
<evidence type="ECO:0000250" key="4">
    <source>
        <dbReference type="UniProtKB" id="Q62658"/>
    </source>
</evidence>
<evidence type="ECO:0000255" key="5">
    <source>
        <dbReference type="PROSITE-ProRule" id="PRU00277"/>
    </source>
</evidence>
<evidence type="ECO:0000269" key="6">
    <source>
    </source>
</evidence>
<evidence type="ECO:0000269" key="7">
    <source>
    </source>
</evidence>
<evidence type="ECO:0000269" key="8">
    <source>
    </source>
</evidence>
<evidence type="ECO:0000269" key="9">
    <source>
    </source>
</evidence>
<evidence type="ECO:0000269" key="10">
    <source>
    </source>
</evidence>
<evidence type="ECO:0000305" key="11"/>
<evidence type="ECO:0007744" key="12">
    <source>
        <dbReference type="PDB" id="3J8H"/>
    </source>
</evidence>
<evidence type="ECO:0007744" key="13">
    <source>
        <dbReference type="PDB" id="5GKY"/>
    </source>
</evidence>
<evidence type="ECO:0007744" key="14">
    <source>
        <dbReference type="PDB" id="5GKZ"/>
    </source>
</evidence>
<evidence type="ECO:0007744" key="15">
    <source>
        <dbReference type="PDB" id="5GL0"/>
    </source>
</evidence>
<evidence type="ECO:0007744" key="16">
    <source>
        <dbReference type="PDB" id="5GL1"/>
    </source>
</evidence>
<keyword id="KW-0002">3D-structure</keyword>
<keyword id="KW-0007">Acetylation</keyword>
<keyword id="KW-0963">Cytoplasm</keyword>
<keyword id="KW-0413">Isomerase</keyword>
<keyword id="KW-0472">Membrane</keyword>
<keyword id="KW-1185">Reference proteome</keyword>
<keyword id="KW-0697">Rotamase</keyword>
<keyword id="KW-0703">Sarcoplasmic reticulum</keyword>
<accession>P62943</accession>
<accession>P20071</accession>
<accession>Q9H103</accession>
<accession>Q9H566</accession>
<protein>
    <recommendedName>
        <fullName>Peptidyl-prolyl cis-trans isomerase FKBP1A</fullName>
        <shortName>PPIase FKBP1A</shortName>
        <ecNumber evidence="3">5.2.1.8</ecNumber>
    </recommendedName>
    <alternativeName>
        <fullName>12 kDa FK506-binding protein</fullName>
        <shortName>12 kDa FKBP</shortName>
        <shortName>FKBP-12</shortName>
    </alternativeName>
    <alternativeName>
        <fullName>Calstabin-1</fullName>
    </alternativeName>
    <alternativeName>
        <fullName>FK506-binding protein 1A</fullName>
        <shortName>FKBP-1A</shortName>
    </alternativeName>
    <alternativeName>
        <fullName>Immunophilin FKBP12</fullName>
    </alternativeName>
    <alternativeName>
        <fullName>Rotamase</fullName>
    </alternativeName>
</protein>
<comment type="function">
    <text evidence="1 6">Keeps in an inactive conformation TGFBR1, the TGF-beta type I serine/threonine kinase receptor, preventing TGF-beta receptor activation in absence of ligand. Recruits SMAD7 to ACVR1B which prevents the association of SMAD2 and SMAD3 with the activin receptor complex, thereby blocking the activin signal. May modulate the RYR1 calcium channel activity. PPIases accelerate the folding of proteins. It catalyzes the cis-trans isomerization of proline imidic peptide bonds in oligopeptides (By similarity).</text>
</comment>
<comment type="catalytic activity">
    <reaction evidence="3">
        <text>[protein]-peptidylproline (omega=180) = [protein]-peptidylproline (omega=0)</text>
        <dbReference type="Rhea" id="RHEA:16237"/>
        <dbReference type="Rhea" id="RHEA-COMP:10747"/>
        <dbReference type="Rhea" id="RHEA-COMP:10748"/>
        <dbReference type="ChEBI" id="CHEBI:83833"/>
        <dbReference type="ChEBI" id="CHEBI:83834"/>
        <dbReference type="EC" id="5.2.1.8"/>
    </reaction>
</comment>
<comment type="activity regulation">
    <text>Inhibited by both FK506 and rapamycin.</text>
</comment>
<comment type="subunit">
    <text evidence="2 3 4 6 7 8 9 10">Interacts with TGFBR1; prevents TGFBR1 phosphorylation by TGFBR2 and stabilizes it in the inactive conformation (By similarity). Interacts with ACVR1B and SMAD7. Identified in a complex composed of RYR1, PDE4D, PKA, FKBP1A and protein phosphatase 1 (PP1). Interacts directly with RYR2 and RYR3 (By similarity). Interacts directly with RYR1 (PubMed:10603943, PubMed:1374404, PubMed:25517095, PubMed:27468892). Interacts with GLMN; rapamycin and FK506 abolish the interaction with GLMN in a dose dependent manner (By similarity).</text>
</comment>
<comment type="interaction">
    <interactant intactId="EBI-16134925">
        <id>P62943</id>
    </interactant>
    <interactant intactId="EBI-6477441">
        <id>P11716</id>
        <label>RYR1</label>
    </interactant>
    <organismsDiffer>false</organismsDiffer>
    <experiments>2</experiments>
</comment>
<comment type="subcellular location">
    <subcellularLocation>
        <location evidence="3">Cytoplasm</location>
        <location evidence="3">Cytosol</location>
    </subcellularLocation>
    <subcellularLocation>
        <location evidence="7 9">Sarcoplasmic reticulum membrane</location>
        <topology evidence="9">Peripheral membrane protein</topology>
        <orientation evidence="9">Cytoplasmic side</orientation>
    </subcellularLocation>
</comment>
<comment type="tissue specificity">
    <text evidence="10">Detected in fast twitch skeletal muscle (at protein level).</text>
</comment>
<comment type="similarity">
    <text evidence="11">Belongs to the FKBP-type PPIase family. FKBP1 subfamily.</text>
</comment>
<sequence>MGVQVETISPGDGRTFPKRGQTCVVHYTGMLEDGKKFDSSRDRNKPFKFMLGKQEVIRGWEEGVAQMSVGQRAKLTISPDYAYGATGHPGIIPPHATLVFDVELLKLE</sequence>
<dbReference type="EC" id="5.2.1.8" evidence="3"/>
<dbReference type="EMBL" id="M89928">
    <property type="protein sequence ID" value="AAA31252.1"/>
    <property type="molecule type" value="Genomic_RNA"/>
</dbReference>
<dbReference type="PIR" id="A42657">
    <property type="entry name" value="A42657"/>
</dbReference>
<dbReference type="RefSeq" id="NP_001164597.1">
    <property type="nucleotide sequence ID" value="NM_001171126.2"/>
</dbReference>
<dbReference type="RefSeq" id="XP_069908085.1">
    <property type="nucleotide sequence ID" value="XM_070051984.1"/>
</dbReference>
<dbReference type="PDB" id="3J8H">
    <property type="method" value="EM"/>
    <property type="resolution" value="3.80 A"/>
    <property type="chains" value="B/D/F/H=2-108"/>
</dbReference>
<dbReference type="PDB" id="5GKY">
    <property type="method" value="EM"/>
    <property type="resolution" value="3.80 A"/>
    <property type="chains" value="B/D/F/H=1-108"/>
</dbReference>
<dbReference type="PDB" id="5GKZ">
    <property type="method" value="EM"/>
    <property type="resolution" value="4.00 A"/>
    <property type="chains" value="B/D/F/H=1-108"/>
</dbReference>
<dbReference type="PDB" id="5GL0">
    <property type="method" value="EM"/>
    <property type="resolution" value="4.20 A"/>
    <property type="chains" value="B/D/F/H=1-108"/>
</dbReference>
<dbReference type="PDB" id="5GL1">
    <property type="method" value="EM"/>
    <property type="resolution" value="5.70 A"/>
    <property type="chains" value="B/D/F/H=1-108"/>
</dbReference>
<dbReference type="PDB" id="7TZC">
    <property type="method" value="EM"/>
    <property type="resolution" value="2.45 A"/>
    <property type="chains" value="F/H/J/O=2-108"/>
</dbReference>
<dbReference type="PDB" id="9E17">
    <property type="method" value="EM"/>
    <property type="resolution" value="2.45 A"/>
    <property type="chains" value="F/H/J/O=1-108"/>
</dbReference>
<dbReference type="PDB" id="9E18">
    <property type="method" value="EM"/>
    <property type="resolution" value="2.68 A"/>
    <property type="chains" value="E/F/G/H=1-108"/>
</dbReference>
<dbReference type="PDB" id="9E19">
    <property type="method" value="EM"/>
    <property type="resolution" value="4.04 A"/>
    <property type="chains" value="E/F/G/H=1-108"/>
</dbReference>
<dbReference type="PDB" id="9E1A">
    <property type="method" value="EM"/>
    <property type="resolution" value="3.35 A"/>
    <property type="chains" value="E/F/G/H=1-108"/>
</dbReference>
<dbReference type="PDB" id="9E1B">
    <property type="method" value="EM"/>
    <property type="resolution" value="4.49 A"/>
    <property type="chains" value="E/F/G/H=1-108"/>
</dbReference>
<dbReference type="PDB" id="9E1C">
    <property type="method" value="EM"/>
    <property type="resolution" value="2.63 A"/>
    <property type="chains" value="E/F/G/H=1-108"/>
</dbReference>
<dbReference type="PDB" id="9E1D">
    <property type="method" value="EM"/>
    <property type="resolution" value="2.76 A"/>
    <property type="chains" value="E/F/G/H=1-108"/>
</dbReference>
<dbReference type="PDB" id="9E1E">
    <property type="method" value="EM"/>
    <property type="resolution" value="2.92 A"/>
    <property type="chains" value="E/F/G/H=1-108"/>
</dbReference>
<dbReference type="PDB" id="9E1F">
    <property type="method" value="EM"/>
    <property type="resolution" value="3.03 A"/>
    <property type="chains" value="E/F/G/H=1-108"/>
</dbReference>
<dbReference type="PDB" id="9E1G">
    <property type="method" value="EM"/>
    <property type="resolution" value="3.17 A"/>
    <property type="chains" value="E/F/G/H=1-108"/>
</dbReference>
<dbReference type="PDB" id="9E1H">
    <property type="method" value="EM"/>
    <property type="resolution" value="3.26 A"/>
    <property type="chains" value="E/F/G/H=1-108"/>
</dbReference>
<dbReference type="PDB" id="9E1I">
    <property type="method" value="EM"/>
    <property type="resolution" value="3.20 A"/>
    <property type="chains" value="E/F/G/H=1-108"/>
</dbReference>
<dbReference type="PDBsum" id="3J8H"/>
<dbReference type="PDBsum" id="5GKY"/>
<dbReference type="PDBsum" id="5GKZ"/>
<dbReference type="PDBsum" id="5GL0"/>
<dbReference type="PDBsum" id="5GL1"/>
<dbReference type="PDBsum" id="7TZC"/>
<dbReference type="PDBsum" id="9E17"/>
<dbReference type="PDBsum" id="9E18"/>
<dbReference type="PDBsum" id="9E19"/>
<dbReference type="PDBsum" id="9E1A"/>
<dbReference type="PDBsum" id="9E1B"/>
<dbReference type="PDBsum" id="9E1C"/>
<dbReference type="PDBsum" id="9E1D"/>
<dbReference type="PDBsum" id="9E1E"/>
<dbReference type="PDBsum" id="9E1F"/>
<dbReference type="PDBsum" id="9E1G"/>
<dbReference type="PDBsum" id="9E1H"/>
<dbReference type="PDBsum" id="9E1I"/>
<dbReference type="BMRB" id="P62943"/>
<dbReference type="EMDB" id="EMD-26205"/>
<dbReference type="EMDB" id="EMD-47385"/>
<dbReference type="EMDB" id="EMD-47386"/>
<dbReference type="EMDB" id="EMD-47387"/>
<dbReference type="EMDB" id="EMD-47388"/>
<dbReference type="EMDB" id="EMD-47389"/>
<dbReference type="EMDB" id="EMD-47390"/>
<dbReference type="EMDB" id="EMD-47391"/>
<dbReference type="EMDB" id="EMD-47392"/>
<dbReference type="EMDB" id="EMD-47393"/>
<dbReference type="EMDB" id="EMD-47394"/>
<dbReference type="EMDB" id="EMD-47395"/>
<dbReference type="EMDB" id="EMD-9518"/>
<dbReference type="EMDB" id="EMD-9519"/>
<dbReference type="EMDB" id="EMD-9520"/>
<dbReference type="EMDB" id="EMD-9521"/>
<dbReference type="SMR" id="P62943"/>
<dbReference type="DIP" id="DIP-61479N"/>
<dbReference type="FunCoup" id="P62943">
    <property type="interactions" value="1706"/>
</dbReference>
<dbReference type="IntAct" id="P62943">
    <property type="interactions" value="1"/>
</dbReference>
<dbReference type="PaxDb" id="9986-ENSOCUP00000008526"/>
<dbReference type="GeneID" id="100328942"/>
<dbReference type="GeneID" id="138842961"/>
<dbReference type="KEGG" id="ocu:100328942"/>
<dbReference type="eggNOG" id="KOG0544">
    <property type="taxonomic scope" value="Eukaryota"/>
</dbReference>
<dbReference type="InParanoid" id="P62943"/>
<dbReference type="OrthoDB" id="1902587at2759"/>
<dbReference type="Proteomes" id="UP000001811">
    <property type="component" value="Unplaced"/>
</dbReference>
<dbReference type="GO" id="GO:0098562">
    <property type="term" value="C:cytoplasmic side of membrane"/>
    <property type="evidence" value="ECO:0000314"/>
    <property type="project" value="UniProtKB"/>
</dbReference>
<dbReference type="GO" id="GO:0005829">
    <property type="term" value="C:cytosol"/>
    <property type="evidence" value="ECO:0007669"/>
    <property type="project" value="UniProtKB-SubCell"/>
</dbReference>
<dbReference type="GO" id="GO:0043231">
    <property type="term" value="C:intracellular membrane-bounded organelle"/>
    <property type="evidence" value="ECO:0000314"/>
    <property type="project" value="AgBase"/>
</dbReference>
<dbReference type="GO" id="GO:1990425">
    <property type="term" value="C:ryanodine receptor complex"/>
    <property type="evidence" value="ECO:0000314"/>
    <property type="project" value="UniProtKB"/>
</dbReference>
<dbReference type="GO" id="GO:0016529">
    <property type="term" value="C:sarcoplasmic reticulum"/>
    <property type="evidence" value="ECO:0000314"/>
    <property type="project" value="UniProtKB"/>
</dbReference>
<dbReference type="GO" id="GO:0014802">
    <property type="term" value="C:terminal cisterna"/>
    <property type="evidence" value="ECO:0000314"/>
    <property type="project" value="BHF-UCL"/>
</dbReference>
<dbReference type="GO" id="GO:0003755">
    <property type="term" value="F:peptidyl-prolyl cis-trans isomerase activity"/>
    <property type="evidence" value="ECO:0007669"/>
    <property type="project" value="UniProtKB-KW"/>
</dbReference>
<dbReference type="GO" id="GO:0010880">
    <property type="term" value="P:regulation of release of sequestered calcium ion into cytosol by sarcoplasmic reticulum"/>
    <property type="evidence" value="ECO:0000315"/>
    <property type="project" value="AgBase"/>
</dbReference>
<dbReference type="GO" id="GO:0060314">
    <property type="term" value="P:regulation of ryanodine-sensitive calcium-release channel activity"/>
    <property type="evidence" value="ECO:0000315"/>
    <property type="project" value="AgBase"/>
</dbReference>
<dbReference type="FunFam" id="3.10.50.40:FF:000024">
    <property type="entry name" value="Peptidyl-prolyl cis-trans isomerase FKBP1A"/>
    <property type="match status" value="1"/>
</dbReference>
<dbReference type="Gene3D" id="3.10.50.40">
    <property type="match status" value="1"/>
</dbReference>
<dbReference type="InterPro" id="IPR050689">
    <property type="entry name" value="FKBP-type_PPIase"/>
</dbReference>
<dbReference type="InterPro" id="IPR046357">
    <property type="entry name" value="PPIase_dom_sf"/>
</dbReference>
<dbReference type="InterPro" id="IPR001179">
    <property type="entry name" value="PPIase_FKBP_dom"/>
</dbReference>
<dbReference type="PANTHER" id="PTHR10516">
    <property type="entry name" value="PEPTIDYL-PROLYL CIS-TRANS ISOMERASE"/>
    <property type="match status" value="1"/>
</dbReference>
<dbReference type="PANTHER" id="PTHR10516:SF301">
    <property type="entry name" value="PEPTIDYL-PROLYL CIS-TRANS ISOMERASE FKBP1A-RELATED"/>
    <property type="match status" value="1"/>
</dbReference>
<dbReference type="Pfam" id="PF00254">
    <property type="entry name" value="FKBP_C"/>
    <property type="match status" value="1"/>
</dbReference>
<dbReference type="SUPFAM" id="SSF54534">
    <property type="entry name" value="FKBP-like"/>
    <property type="match status" value="1"/>
</dbReference>
<dbReference type="PROSITE" id="PS50059">
    <property type="entry name" value="FKBP_PPIASE"/>
    <property type="match status" value="1"/>
</dbReference>
<proteinExistence type="evidence at protein level"/>
<reference key="1">
    <citation type="journal article" date="1992" name="J. Biol. Chem.">
        <title>FK506 binding protein associated with the calcium release channel (ryanodine receptor).</title>
        <authorList>
            <person name="Jayaraman T."/>
            <person name="Brillantes A.M."/>
            <person name="Timerman A.P."/>
            <person name="Fleischer S."/>
            <person name="Erdjument-Bromage H."/>
            <person name="Tempst P."/>
            <person name="Marks A.R."/>
        </authorList>
    </citation>
    <scope>NUCLEOTIDE SEQUENCE [GENOMIC RNA]</scope>
    <scope>SUBCELLULAR LOCATION</scope>
    <scope>INTERACTION WITH RYR1</scope>
</reference>
<reference key="2">
    <citation type="journal article" date="1995" name="Biochem. Biophys. Res. Commun.">
        <title>Affinity purification of the ryanodine receptor/calcium release channel from fast twitch skeletal muscle based on its tight association with FKBP12.</title>
        <authorList>
            <person name="Xin H.B."/>
            <person name="Timerman A.P."/>
            <person name="Onoue H."/>
            <person name="Wiederrecht G.J."/>
            <person name="Fleischer S."/>
        </authorList>
    </citation>
    <scope>INTERACTION WITH RYR1</scope>
    <scope>TISSUE SPECIFICITY</scope>
</reference>
<reference key="3">
    <citation type="journal article" date="1998" name="Ann. N. Y. Acad. Sci.">
        <title>FKBP12 modulates gating of the ryanodine receptor/calcium release channel.</title>
        <authorList>
            <person name="Ondrias K."/>
            <person name="Marx S.O."/>
            <person name="Gaburjakova M."/>
            <person name="Marks A.R."/>
        </authorList>
    </citation>
    <scope>INTERACTION WITH RYR1</scope>
    <scope>FUNCTION</scope>
</reference>
<reference evidence="12" key="4">
    <citation type="journal article" date="2015" name="Nature">
        <title>Structure of the rabbit ryanodine receptor RyR1 at near-atomic resolution.</title>
        <authorList>
            <person name="Yan Z."/>
            <person name="Bai X.C."/>
            <person name="Yan C."/>
            <person name="Wu J."/>
            <person name="Li Z."/>
            <person name="Xie T."/>
            <person name="Peng W."/>
            <person name="Yin C.C."/>
            <person name="Li X."/>
            <person name="Scheres S.H."/>
            <person name="Shi Y."/>
            <person name="Yan N."/>
        </authorList>
    </citation>
    <scope>STRUCTURE BY ELECTRON MICROSCOPY (3.80 ANGSTROMS) IN COMPLEX WITH RYR1</scope>
</reference>
<reference evidence="13 14 15 16" key="5">
    <citation type="journal article" date="2016" name="Cell Res.">
        <title>The central domain of RyR1 is the transducer for long-range allosteric gating of channel opening.</title>
        <authorList>
            <person name="Bai X.C."/>
            <person name="Yan Z."/>
            <person name="Wu J."/>
            <person name="Li Z."/>
            <person name="Yan N."/>
        </authorList>
    </citation>
    <scope>STRUCTURE BY ELECTRON MICROSCOPY (3.80 ANGSTROMS) IN COMPLEX WITH RYR1</scope>
    <scope>SUBCELLULAR LOCATION</scope>
    <scope>TOPOLOGY</scope>
</reference>
<gene>
    <name type="primary">FKBP1A</name>
    <name type="synonym">FKBP1</name>
    <name type="synonym">FKBP12</name>
</gene>
<feature type="chain" id="PRO_0000075291" description="Peptidyl-prolyl cis-trans isomerase FKBP1A">
    <location>
        <begin position="1"/>
        <end position="108"/>
    </location>
</feature>
<feature type="domain" description="PPIase FKBP-type" evidence="5">
    <location>
        <begin position="20"/>
        <end position="108"/>
    </location>
</feature>
<feature type="modified residue" description="N6-acetyllysine; alternate" evidence="2">
    <location>
        <position position="53"/>
    </location>
</feature>
<feature type="modified residue" description="N6-succinyllysine; alternate" evidence="2">
    <location>
        <position position="53"/>
    </location>
</feature>
<name>FKB1A_RABIT</name>